<reference evidence="9" key="1">
    <citation type="journal article" date="2012" name="BMC Genomics">
        <title>Sequencing the genome of Marssonina brunnea reveals fungus-poplar co-evolution.</title>
        <authorList>
            <person name="Zhu S."/>
            <person name="Cao Y.-Z."/>
            <person name="Jiang C."/>
            <person name="Tan B.-Y."/>
            <person name="Wang Z."/>
            <person name="Feng S."/>
            <person name="Zhang L."/>
            <person name="Su X.-H."/>
            <person name="Brejova B."/>
            <person name="Vinar T."/>
            <person name="Xu M."/>
            <person name="Wang M.-X."/>
            <person name="Zhang S.-G."/>
            <person name="Huang M.-R."/>
            <person name="Wu R."/>
            <person name="Zhou Y."/>
        </authorList>
    </citation>
    <scope>NUCLEOTIDE SEQUENCE [LARGE SCALE GENOMIC DNA]</scope>
    <source>
        <strain evidence="9">MB_m1</strain>
    </source>
</reference>
<reference evidence="7" key="2">
    <citation type="journal article" date="2022" name="Front. Cell. Infect. Microbiol.">
        <title>Systematic identification and functional characterization of the CFEM proteins in poplar fungus Marssonina brunnea.</title>
        <authorList>
            <person name="Qian Y."/>
            <person name="Zheng X."/>
            <person name="Wang X."/>
            <person name="Yang J."/>
            <person name="Zheng X."/>
            <person name="Zeng Q."/>
            <person name="Li J."/>
            <person name="Zhuge Q."/>
            <person name="Xiong Q."/>
        </authorList>
    </citation>
    <scope>FUNCTION</scope>
    <scope>SUBCELLULAR LOCATION</scope>
    <scope>INDUCTION</scope>
    <source>
        <strain evidence="6">J4</strain>
    </source>
</reference>
<dbReference type="EMBL" id="JH921437">
    <property type="protein sequence ID" value="EKD16939.1"/>
    <property type="molecule type" value="Genomic_DNA"/>
</dbReference>
<dbReference type="RefSeq" id="XP_007292405.1">
    <property type="nucleotide sequence ID" value="XM_007292343.1"/>
</dbReference>
<dbReference type="STRING" id="1072389.K1XW16"/>
<dbReference type="GeneID" id="18760451"/>
<dbReference type="KEGG" id="mbe:MBM_04516"/>
<dbReference type="eggNOG" id="ENOG502S2Z9">
    <property type="taxonomic scope" value="Eukaryota"/>
</dbReference>
<dbReference type="HOGENOM" id="CLU_063084_1_3_1"/>
<dbReference type="InParanoid" id="K1XW16"/>
<dbReference type="OMA" id="ITEAGCQ"/>
<dbReference type="OrthoDB" id="3767534at2759"/>
<dbReference type="Proteomes" id="UP000006753">
    <property type="component" value="Unassembled WGS sequence"/>
</dbReference>
<dbReference type="GO" id="GO:0005615">
    <property type="term" value="C:extracellular space"/>
    <property type="evidence" value="ECO:0000314"/>
    <property type="project" value="UniProtKB"/>
</dbReference>
<dbReference type="GO" id="GO:0042025">
    <property type="term" value="C:host cell nucleus"/>
    <property type="evidence" value="ECO:0000314"/>
    <property type="project" value="UniProtKB"/>
</dbReference>
<dbReference type="GO" id="GO:0020002">
    <property type="term" value="C:host cell plasma membrane"/>
    <property type="evidence" value="ECO:0000314"/>
    <property type="project" value="UniProtKB"/>
</dbReference>
<dbReference type="GO" id="GO:0005886">
    <property type="term" value="C:plasma membrane"/>
    <property type="evidence" value="ECO:0007669"/>
    <property type="project" value="UniProtKB-SubCell"/>
</dbReference>
<dbReference type="GO" id="GO:0098552">
    <property type="term" value="C:side of membrane"/>
    <property type="evidence" value="ECO:0007669"/>
    <property type="project" value="UniProtKB-KW"/>
</dbReference>
<dbReference type="GO" id="GO:0046872">
    <property type="term" value="F:metal ion binding"/>
    <property type="evidence" value="ECO:0007669"/>
    <property type="project" value="UniProtKB-KW"/>
</dbReference>
<dbReference type="GO" id="GO:0051701">
    <property type="term" value="P:biological process involved in interaction with host"/>
    <property type="evidence" value="ECO:0000314"/>
    <property type="project" value="UniProtKB"/>
</dbReference>
<dbReference type="InterPro" id="IPR008427">
    <property type="entry name" value="Extracellular_membr_CFEM_dom"/>
</dbReference>
<dbReference type="Pfam" id="PF05730">
    <property type="entry name" value="CFEM"/>
    <property type="match status" value="1"/>
</dbReference>
<dbReference type="PROSITE" id="PS52012">
    <property type="entry name" value="CFEM"/>
    <property type="match status" value="1"/>
</dbReference>
<evidence type="ECO:0000250" key="1">
    <source>
        <dbReference type="UniProtKB" id="Q5A0X8"/>
    </source>
</evidence>
<evidence type="ECO:0000255" key="2"/>
<evidence type="ECO:0000255" key="3">
    <source>
        <dbReference type="PROSITE-ProRule" id="PRU00498"/>
    </source>
</evidence>
<evidence type="ECO:0000255" key="4">
    <source>
        <dbReference type="PROSITE-ProRule" id="PRU01356"/>
    </source>
</evidence>
<evidence type="ECO:0000269" key="5">
    <source>
    </source>
</evidence>
<evidence type="ECO:0000303" key="6">
    <source>
    </source>
</evidence>
<evidence type="ECO:0000305" key="7"/>
<evidence type="ECO:0000312" key="8">
    <source>
        <dbReference type="EMBL" id="EKD16939.1"/>
    </source>
</evidence>
<evidence type="ECO:0000312" key="9">
    <source>
        <dbReference type="Proteomes" id="UP000006753"/>
    </source>
</evidence>
<gene>
    <name evidence="6" type="primary">CFEM8</name>
    <name evidence="8" type="ORF">MBM_04516</name>
</gene>
<protein>
    <recommendedName>
        <fullName evidence="6">Effector CFEM8</fullName>
    </recommendedName>
    <alternativeName>
        <fullName evidence="6">MbCFEM8</fullName>
    </alternativeName>
</protein>
<organism evidence="9">
    <name type="scientific">Marssonina brunnea f. sp. multigermtubi (strain MB_m1)</name>
    <name type="common">Marssonina leaf spot fungus</name>
    <dbReference type="NCBI Taxonomy" id="1072389"/>
    <lineage>
        <taxon>Eukaryota</taxon>
        <taxon>Fungi</taxon>
        <taxon>Dikarya</taxon>
        <taxon>Ascomycota</taxon>
        <taxon>Pezizomycotina</taxon>
        <taxon>Leotiomycetes</taxon>
        <taxon>Helotiales</taxon>
        <taxon>Drepanopezizaceae</taxon>
        <taxon>Drepanopeziza</taxon>
    </lineage>
</organism>
<sequence length="167" mass="15947">MQFSIVVMAALASLASAQSMDGIPTCALQCLAQAVVTGGCEASDQACQCGPAREAITAAATPCLLSACTDAADLATAASVGNGMCDKYKMGGDDAAPSPSVNTPAAAAPYPTAPAPNGTVPIGTAAAPSPTANTNETTTVATGSAPQNVAGGLAGIFGLVVAAAFAL</sequence>
<accession>K1XW16</accession>
<feature type="signal peptide" evidence="2">
    <location>
        <begin position="1"/>
        <end position="17"/>
    </location>
</feature>
<feature type="chain" id="PRO_5003853265" description="Effector CFEM8" evidence="2">
    <location>
        <begin position="18"/>
        <end position="143"/>
    </location>
</feature>
<feature type="propeptide" id="PRO_0000457868" description="Removed in mature form" evidence="2">
    <location>
        <begin position="144"/>
        <end position="167"/>
    </location>
</feature>
<feature type="domain" description="CFEM" evidence="4">
    <location>
        <begin position="18"/>
        <end position="112"/>
    </location>
</feature>
<feature type="binding site" description="axial binding residue" evidence="4">
    <location>
        <position position="44"/>
    </location>
    <ligand>
        <name>heme</name>
        <dbReference type="ChEBI" id="CHEBI:30413"/>
    </ligand>
    <ligandPart>
        <name>Fe</name>
        <dbReference type="ChEBI" id="CHEBI:18248"/>
    </ligandPart>
</feature>
<feature type="lipid moiety-binding region" description="GPI-anchor amidated glycine" evidence="2">
    <location>
        <position position="143"/>
    </location>
</feature>
<feature type="glycosylation site" description="N-linked (GlcNAc...) asparagine" evidence="3">
    <location>
        <position position="117"/>
    </location>
</feature>
<feature type="glycosylation site" description="N-linked (GlcNAc...) asparagine" evidence="3">
    <location>
        <position position="135"/>
    </location>
</feature>
<feature type="disulfide bond" evidence="4">
    <location>
        <begin position="26"/>
        <end position="68"/>
    </location>
</feature>
<feature type="disulfide bond" evidence="4">
    <location>
        <begin position="30"/>
        <end position="63"/>
    </location>
</feature>
<feature type="disulfide bond" evidence="4">
    <location>
        <begin position="40"/>
        <end position="47"/>
    </location>
</feature>
<feature type="disulfide bond" evidence="4">
    <location>
        <begin position="49"/>
        <end position="85"/>
    </location>
</feature>
<name>CFM8_MARBU</name>
<keyword id="KW-1003">Cell membrane</keyword>
<keyword id="KW-1015">Disulfide bond</keyword>
<keyword id="KW-0325">Glycoprotein</keyword>
<keyword id="KW-0336">GPI-anchor</keyword>
<keyword id="KW-0349">Heme</keyword>
<keyword id="KW-1032">Host cell membrane</keyword>
<keyword id="KW-1043">Host membrane</keyword>
<keyword id="KW-1048">Host nucleus</keyword>
<keyword id="KW-0408">Iron</keyword>
<keyword id="KW-0449">Lipoprotein</keyword>
<keyword id="KW-0472">Membrane</keyword>
<keyword id="KW-0479">Metal-binding</keyword>
<keyword id="KW-1185">Reference proteome</keyword>
<keyword id="KW-0964">Secreted</keyword>
<keyword id="KW-0732">Signal</keyword>
<keyword id="KW-0843">Virulence</keyword>
<proteinExistence type="evidence at transcript level"/>
<comment type="function">
    <text evidence="5">Appears to function during host infection, and may play a role in suppressing the host immune response.</text>
</comment>
<comment type="subcellular location">
    <subcellularLocation>
        <location evidence="2">Cell membrane</location>
        <topology evidence="2">Lipid-anchor</topology>
        <topology evidence="2">GPI-anchor</topology>
    </subcellularLocation>
    <subcellularLocation>
        <location evidence="5">Secreted</location>
    </subcellularLocation>
    <subcellularLocation>
        <location evidence="5">Host nucleus</location>
    </subcellularLocation>
    <subcellularLocation>
        <location evidence="5">Host cell membrane</location>
    </subcellularLocation>
</comment>
<comment type="induction">
    <text evidence="5">Induced during infection of poplar leaves, with highest expression observed four days post inoculation.</text>
</comment>
<comment type="domain">
    <text evidence="1">The CFEM domain is involved in heme-binding and contains 8 cysteines and is found in proteins from several pathogenic fungi, including both human and plant pathogens (By similarity). The CFEM domain adopts a novel helical-basket fold that consists of six alpha-helices, and is uniquely stabilized by four disulfide bonds formed by its 8 signature cysteines (By similarity).</text>
</comment>
<comment type="similarity">
    <text evidence="7">Belongs to the RBT5 family.</text>
</comment>